<keyword id="KW-0012">Acyltransferase</keyword>
<keyword id="KW-0997">Cell inner membrane</keyword>
<keyword id="KW-1003">Cell membrane</keyword>
<keyword id="KW-0444">Lipid biosynthesis</keyword>
<keyword id="KW-0443">Lipid metabolism</keyword>
<keyword id="KW-0472">Membrane</keyword>
<keyword id="KW-0594">Phospholipid biosynthesis</keyword>
<keyword id="KW-1208">Phospholipid metabolism</keyword>
<keyword id="KW-1185">Reference proteome</keyword>
<keyword id="KW-0808">Transferase</keyword>
<proteinExistence type="inferred from homology"/>
<reference key="1">
    <citation type="journal article" date="2002" name="Nat. Biotechnol.">
        <title>Genome sequence of the dissimilatory metal ion-reducing bacterium Shewanella oneidensis.</title>
        <authorList>
            <person name="Heidelberg J.F."/>
            <person name="Paulsen I.T."/>
            <person name="Nelson K.E."/>
            <person name="Gaidos E.J."/>
            <person name="Nelson W.C."/>
            <person name="Read T.D."/>
            <person name="Eisen J.A."/>
            <person name="Seshadri R."/>
            <person name="Ward N.L."/>
            <person name="Methe B.A."/>
            <person name="Clayton R.A."/>
            <person name="Meyer T."/>
            <person name="Tsapin A."/>
            <person name="Scott J."/>
            <person name="Beanan M.J."/>
            <person name="Brinkac L.M."/>
            <person name="Daugherty S.C."/>
            <person name="DeBoy R.T."/>
            <person name="Dodson R.J."/>
            <person name="Durkin A.S."/>
            <person name="Haft D.H."/>
            <person name="Kolonay J.F."/>
            <person name="Madupu R."/>
            <person name="Peterson J.D."/>
            <person name="Umayam L.A."/>
            <person name="White O."/>
            <person name="Wolf A.M."/>
            <person name="Vamathevan J.J."/>
            <person name="Weidman J.F."/>
            <person name="Impraim M."/>
            <person name="Lee K."/>
            <person name="Berry K.J."/>
            <person name="Lee C."/>
            <person name="Mueller J."/>
            <person name="Khouri H.M."/>
            <person name="Gill J."/>
            <person name="Utterback T.R."/>
            <person name="McDonald L.A."/>
            <person name="Feldblyum T.V."/>
            <person name="Smith H.O."/>
            <person name="Venter J.C."/>
            <person name="Nealson K.H."/>
            <person name="Fraser C.M."/>
        </authorList>
    </citation>
    <scope>NUCLEOTIDE SEQUENCE [LARGE SCALE GENOMIC DNA]</scope>
    <source>
        <strain>ATCC 700550 / JCM 31522 / CIP 106686 / LMG 19005 / NCIMB 14063 / MR-1</strain>
    </source>
</reference>
<feature type="chain" id="PRO_0000195233" description="Glycerol-3-phosphate acyltransferase">
    <location>
        <begin position="1"/>
        <end position="809"/>
    </location>
</feature>
<feature type="short sequence motif" description="HXXXXD motif">
    <location>
        <begin position="309"/>
        <end position="314"/>
    </location>
</feature>
<sequence>MPKQDSLWLKSLRWIQKYLVHTIVVPQDPFADLNLDASRPLAYVMKTESLSDIAALSEITAKLGLPSPYEPLVVNGVVAPRVVCLEGRKPLFGDRASNEPFLECFMRLLAVHKEKPELDIQLVPVSLYWGRTPGKEDDTMKAAVLERENPTWLRKCLMILFLGRHNFVQFSNAVSLRYMADEHGTDMGIAHKLARVARVHFRRQRKVMTGPVLPNRQALFDSLLKSESLRKAIQEEAASKKISETQARETAIEYLDEIAANYSDSLVRIAERFLTWLWNKLYSGINIKGAEQIRQLHHDGHEIVYVPCHRSHMDYLLLSYILYYQGMVPPHIAAGINLNFWPAGPLFRRGGAFFIRRSFNGNKLYTAVFREYLDQLFAKGYSVEYFSEGGRSRTGRLLAPKTGMIAMTINSVLRGIERPVTLVPVYLGYDHVMEVATYHKELSGKKKQKESVWQVFGAIRKLGNFGQGYVNFGEPITLQNFLNETAPNWRSEVADDPEQKPTWLTPAVNVLANRVMTRINDAAAASSITLTSLVLLASEQNALERCLLERQLDLYLTLLKRVPYTSFTSVAEGDGKHLVQQGLELNKFSISADPLGEIVSIDDKQAISMTYYRNNIIHLFIIPSLIASCLINNKQISRAQIFGVVNDFYPLLKAELFMGIKDLPSYVDQVLDLFIEQGLVEETELLSVATERASQMLLLAGSVNETLQRYAIIFNLLAHRPKMERSDLESESHLLAQRLGALHGITAPEFYDKKLYNTLSVKLKELGYFSGKEDKSDVERIREQANNLLRASVRQTIVASVTAEQSFNG</sequence>
<accession>Q8E8Q9</accession>
<protein>
    <recommendedName>
        <fullName evidence="1">Glycerol-3-phosphate acyltransferase</fullName>
        <shortName evidence="1">GPAT</shortName>
        <ecNumber evidence="1">2.3.1.15</ecNumber>
    </recommendedName>
</protein>
<gene>
    <name evidence="1" type="primary">plsB</name>
    <name type="ordered locus">SO_4602</name>
</gene>
<comment type="catalytic activity">
    <reaction evidence="1">
        <text>sn-glycerol 3-phosphate + an acyl-CoA = a 1-acyl-sn-glycero-3-phosphate + CoA</text>
        <dbReference type="Rhea" id="RHEA:15325"/>
        <dbReference type="ChEBI" id="CHEBI:57287"/>
        <dbReference type="ChEBI" id="CHEBI:57597"/>
        <dbReference type="ChEBI" id="CHEBI:57970"/>
        <dbReference type="ChEBI" id="CHEBI:58342"/>
        <dbReference type="EC" id="2.3.1.15"/>
    </reaction>
</comment>
<comment type="pathway">
    <text evidence="1">Phospholipid metabolism; CDP-diacylglycerol biosynthesis; CDP-diacylglycerol from sn-glycerol 3-phosphate: step 1/3.</text>
</comment>
<comment type="subcellular location">
    <subcellularLocation>
        <location evidence="1">Cell inner membrane</location>
        <topology evidence="1">Peripheral membrane protein</topology>
        <orientation evidence="1">Cytoplasmic side</orientation>
    </subcellularLocation>
</comment>
<comment type="domain">
    <text evidence="1">The HXXXXD motif is essential for acyltransferase activity and may constitute the binding site for the phosphate moiety of the glycerol-3-phosphate.</text>
</comment>
<comment type="similarity">
    <text evidence="1">Belongs to the GPAT/DAPAT family.</text>
</comment>
<organism>
    <name type="scientific">Shewanella oneidensis (strain ATCC 700550 / JCM 31522 / CIP 106686 / LMG 19005 / NCIMB 14063 / MR-1)</name>
    <dbReference type="NCBI Taxonomy" id="211586"/>
    <lineage>
        <taxon>Bacteria</taxon>
        <taxon>Pseudomonadati</taxon>
        <taxon>Pseudomonadota</taxon>
        <taxon>Gammaproteobacteria</taxon>
        <taxon>Alteromonadales</taxon>
        <taxon>Shewanellaceae</taxon>
        <taxon>Shewanella</taxon>
    </lineage>
</organism>
<dbReference type="EC" id="2.3.1.15" evidence="1"/>
<dbReference type="EMBL" id="AE014299">
    <property type="protein sequence ID" value="AAN57562.1"/>
    <property type="molecule type" value="Genomic_DNA"/>
</dbReference>
<dbReference type="RefSeq" id="NP_720118.1">
    <property type="nucleotide sequence ID" value="NC_004347.2"/>
</dbReference>
<dbReference type="RefSeq" id="WP_011074199.1">
    <property type="nucleotide sequence ID" value="NC_004347.2"/>
</dbReference>
<dbReference type="SMR" id="Q8E8Q9"/>
<dbReference type="STRING" id="211586.SO_4602"/>
<dbReference type="PaxDb" id="211586-SO_4602"/>
<dbReference type="KEGG" id="son:SO_4602"/>
<dbReference type="PATRIC" id="fig|211586.12.peg.4460"/>
<dbReference type="eggNOG" id="COG2937">
    <property type="taxonomic scope" value="Bacteria"/>
</dbReference>
<dbReference type="HOGENOM" id="CLU_015407_0_0_6"/>
<dbReference type="OrthoDB" id="335193at2"/>
<dbReference type="PhylomeDB" id="Q8E8Q9"/>
<dbReference type="BioCyc" id="SONE211586:G1GMP-4252-MONOMER"/>
<dbReference type="UniPathway" id="UPA00557">
    <property type="reaction ID" value="UER00612"/>
</dbReference>
<dbReference type="Proteomes" id="UP000008186">
    <property type="component" value="Chromosome"/>
</dbReference>
<dbReference type="GO" id="GO:0005886">
    <property type="term" value="C:plasma membrane"/>
    <property type="evidence" value="ECO:0007669"/>
    <property type="project" value="UniProtKB-SubCell"/>
</dbReference>
<dbReference type="GO" id="GO:0004366">
    <property type="term" value="F:glycerol-3-phosphate O-acyltransferase activity"/>
    <property type="evidence" value="ECO:0000318"/>
    <property type="project" value="GO_Central"/>
</dbReference>
<dbReference type="GO" id="GO:0016024">
    <property type="term" value="P:CDP-diacylglycerol biosynthetic process"/>
    <property type="evidence" value="ECO:0007669"/>
    <property type="project" value="UniProtKB-UniRule"/>
</dbReference>
<dbReference type="GO" id="GO:0006631">
    <property type="term" value="P:fatty acid metabolic process"/>
    <property type="evidence" value="ECO:0000318"/>
    <property type="project" value="GO_Central"/>
</dbReference>
<dbReference type="GO" id="GO:0008654">
    <property type="term" value="P:phospholipid biosynthetic process"/>
    <property type="evidence" value="ECO:0000318"/>
    <property type="project" value="GO_Central"/>
</dbReference>
<dbReference type="CDD" id="cd07993">
    <property type="entry name" value="LPLAT_DHAPAT-like"/>
    <property type="match status" value="1"/>
</dbReference>
<dbReference type="HAMAP" id="MF_00393">
    <property type="entry name" value="Glyc3P_acyltrans"/>
    <property type="match status" value="1"/>
</dbReference>
<dbReference type="InterPro" id="IPR022284">
    <property type="entry name" value="GPAT/DHAPAT"/>
</dbReference>
<dbReference type="InterPro" id="IPR045520">
    <property type="entry name" value="GPAT/DHAPAT_C"/>
</dbReference>
<dbReference type="InterPro" id="IPR041728">
    <property type="entry name" value="GPAT/DHAPAT_LPLAT"/>
</dbReference>
<dbReference type="InterPro" id="IPR028354">
    <property type="entry name" value="GPAT_PlsB"/>
</dbReference>
<dbReference type="InterPro" id="IPR002123">
    <property type="entry name" value="Plipid/glycerol_acylTrfase"/>
</dbReference>
<dbReference type="NCBIfam" id="TIGR03703">
    <property type="entry name" value="plsB"/>
    <property type="match status" value="1"/>
</dbReference>
<dbReference type="NCBIfam" id="NF003441">
    <property type="entry name" value="PRK04974.1"/>
    <property type="match status" value="1"/>
</dbReference>
<dbReference type="PANTHER" id="PTHR12563:SF17">
    <property type="entry name" value="DIHYDROXYACETONE PHOSPHATE ACYLTRANSFERASE"/>
    <property type="match status" value="1"/>
</dbReference>
<dbReference type="PANTHER" id="PTHR12563">
    <property type="entry name" value="GLYCEROL-3-PHOSPHATE ACYLTRANSFERASE"/>
    <property type="match status" value="1"/>
</dbReference>
<dbReference type="Pfam" id="PF01553">
    <property type="entry name" value="Acyltransferase"/>
    <property type="match status" value="1"/>
</dbReference>
<dbReference type="Pfam" id="PF19277">
    <property type="entry name" value="GPAT_C"/>
    <property type="match status" value="1"/>
</dbReference>
<dbReference type="PIRSF" id="PIRSF500064">
    <property type="entry name" value="GPAT"/>
    <property type="match status" value="1"/>
</dbReference>
<dbReference type="PIRSF" id="PIRSF000437">
    <property type="entry name" value="GPAT_DHAPAT"/>
    <property type="match status" value="1"/>
</dbReference>
<dbReference type="SMART" id="SM00563">
    <property type="entry name" value="PlsC"/>
    <property type="match status" value="1"/>
</dbReference>
<dbReference type="SUPFAM" id="SSF69593">
    <property type="entry name" value="Glycerol-3-phosphate (1)-acyltransferase"/>
    <property type="match status" value="1"/>
</dbReference>
<name>PLSB_SHEON</name>
<evidence type="ECO:0000255" key="1">
    <source>
        <dbReference type="HAMAP-Rule" id="MF_00393"/>
    </source>
</evidence>